<feature type="initiator methionine" description="Removed; by host" evidence="1">
    <location>
        <position position="1"/>
    </location>
</feature>
<feature type="chain" id="PRO_0000261265" description="Gag-Pol polyprotein">
    <location>
        <begin position="2"/>
        <end position="550" status="greater than"/>
    </location>
</feature>
<feature type="chain" id="PRO_0000042339" description="Matrix protein p17" evidence="1">
    <location>
        <begin position="2"/>
        <end position="132"/>
    </location>
</feature>
<feature type="chain" id="PRO_0000042340" description="Capsid protein p24" evidence="1">
    <location>
        <begin position="133"/>
        <end position="363"/>
    </location>
</feature>
<feature type="peptide" id="PRO_0000042341" description="Spacer peptide 1" evidence="1">
    <location>
        <begin position="364"/>
        <end position="377"/>
    </location>
</feature>
<feature type="chain" id="PRO_0000042342" description="Nucleocapsid protein p7" evidence="1">
    <location>
        <begin position="378"/>
        <end position="432"/>
    </location>
</feature>
<feature type="peptide" id="PRO_0000246713" description="Transframe peptide" evidence="6">
    <location>
        <begin position="433"/>
        <end position="440"/>
    </location>
</feature>
<feature type="chain" id="PRO_0000042343" description="p6-pol" evidence="6">
    <location>
        <begin position="441"/>
        <end position="488"/>
    </location>
</feature>
<feature type="chain" id="PRO_0000038653" description="Protease" evidence="1">
    <location>
        <begin position="489"/>
        <end position="550" status="greater than"/>
    </location>
</feature>
<feature type="domain" description="Peptidase A2" evidence="8">
    <location>
        <begin position="508"/>
        <end position="550" status="greater than"/>
    </location>
</feature>
<feature type="zinc finger region" description="CCHC-type 1" evidence="7">
    <location>
        <begin position="390"/>
        <end position="407"/>
    </location>
</feature>
<feature type="zinc finger region" description="CCHC-type 2" evidence="7">
    <location>
        <begin position="411"/>
        <end position="428"/>
    </location>
</feature>
<feature type="region of interest" description="Interaction with Gp41" evidence="5">
    <location>
        <begin position="7"/>
        <end position="31"/>
    </location>
</feature>
<feature type="region of interest" description="Interaction with host CALM1" evidence="3">
    <location>
        <begin position="8"/>
        <end position="43"/>
    </location>
</feature>
<feature type="region of interest" description="Interaction with host AP3D1" evidence="5">
    <location>
        <begin position="12"/>
        <end position="19"/>
    </location>
</feature>
<feature type="region of interest" description="Interaction with membrane phosphatidylinositol 4,5-bisphosphate and RNA" evidence="5">
    <location>
        <begin position="14"/>
        <end position="33"/>
    </location>
</feature>
<feature type="region of interest" description="Interaction with membrane phosphatidylinositol 4,5-bisphosphate" evidence="5">
    <location>
        <begin position="73"/>
        <end position="77"/>
    </location>
</feature>
<feature type="region of interest" description="Disordered" evidence="10">
    <location>
        <begin position="106"/>
        <end position="128"/>
    </location>
</feature>
<feature type="region of interest" description="Interaction with human PPIA/CYPA and NUP153" evidence="5">
    <location>
        <begin position="189"/>
        <end position="227"/>
    </location>
</feature>
<feature type="region of interest" description="Dimerization/Multimerization of capsid protein p24" evidence="3">
    <location>
        <begin position="277"/>
        <end position="363"/>
    </location>
</feature>
<feature type="region of interest" description="Disordered" evidence="10">
    <location>
        <begin position="444"/>
        <end position="464"/>
    </location>
</feature>
<feature type="region of interest" description="Dimerization of protease" evidence="3">
    <location>
        <begin position="489"/>
        <end position="493"/>
    </location>
</feature>
<feature type="region of interest" description="Dimerization of protease" evidence="3">
    <location>
        <begin position="537"/>
        <end position="543"/>
    </location>
</feature>
<feature type="short sequence motif" description="Nuclear export signal" evidence="1">
    <location>
        <begin position="16"/>
        <end position="22"/>
    </location>
</feature>
<feature type="short sequence motif" description="Nuclear localization signal" evidence="1">
    <location>
        <begin position="26"/>
        <end position="32"/>
    </location>
</feature>
<feature type="compositionally biased region" description="Polar residues" evidence="10">
    <location>
        <begin position="450"/>
        <end position="459"/>
    </location>
</feature>
<feature type="active site" description="For protease activity; shared with dimeric partner" evidence="9">
    <location>
        <position position="513"/>
    </location>
</feature>
<feature type="site" description="Cleavage; by viral protease" evidence="1">
    <location>
        <begin position="132"/>
        <end position="133"/>
    </location>
</feature>
<feature type="site" description="Cis/trans isomerization of proline peptide bond; by human PPIA/CYPA" evidence="1">
    <location>
        <begin position="221"/>
        <end position="222"/>
    </location>
</feature>
<feature type="site" description="Cleavage; by viral protease" evidence="1">
    <location>
        <begin position="363"/>
        <end position="364"/>
    </location>
</feature>
<feature type="site" description="Cleavage; by viral protease" evidence="1">
    <location>
        <begin position="377"/>
        <end position="378"/>
    </location>
</feature>
<feature type="site" description="Cleavage; by viral protease" evidence="6">
    <location>
        <begin position="432"/>
        <end position="433"/>
    </location>
</feature>
<feature type="site" description="Cleavage; by viral protease" evidence="1">
    <location>
        <begin position="440"/>
        <end position="441"/>
    </location>
</feature>
<feature type="site" description="Cleavage; by viral protease" evidence="1">
    <location>
        <begin position="488"/>
        <end position="489"/>
    </location>
</feature>
<feature type="modified residue" description="Phosphotyrosine; by host" evidence="1">
    <location>
        <position position="132"/>
    </location>
</feature>
<feature type="lipid moiety-binding region" description="N-myristoyl glycine; by host" evidence="1">
    <location>
        <position position="2"/>
    </location>
</feature>
<feature type="non-terminal residue">
    <location>
        <position position="550"/>
    </location>
</feature>
<name>POL_HV1C4</name>
<organism>
    <name type="scientific">Human immunodeficiency virus type 1 group M subtype B (isolate CDC-451)</name>
    <name type="common">HIV-1</name>
    <dbReference type="NCBI Taxonomy" id="11687"/>
    <lineage>
        <taxon>Viruses</taxon>
        <taxon>Riboviria</taxon>
        <taxon>Pararnavirae</taxon>
        <taxon>Artverviricota</taxon>
        <taxon>Revtraviricetes</taxon>
        <taxon>Ortervirales</taxon>
        <taxon>Retroviridae</taxon>
        <taxon>Orthoretrovirinae</taxon>
        <taxon>Lentivirus</taxon>
        <taxon>Human immunodeficiency virus type 1</taxon>
    </lineage>
</organism>
<proteinExistence type="inferred from homology"/>
<sequence length="550" mass="61404">MGARASVLSGGELDRWEKIRLRPGGKKQYRLKHIVWASRKLERFAVNPGLLETSKGCRQILGQLQPSLQTGSEELRSLYNTVATLYCVHQRIEVRDTKEALDKIEEEQNKSKKKAQQAAADTGNSSQVSQNYPIVQNLQGQMVHQAISPRTLNAWVKVIEEKAFSPEVIPMFAALSEGATPQDLNTMLNTVGGHQAAMQMLKETINEEAAEWDRLHPVHAGPIAPGQMREPRGSDIAGTTSTLQEQIGWMTNNPPTPVGEIYKRWIILGLNKIVRMYSPISILDIRQGPKEPFRDYVDRFYKTLRAEQASQEVKNWMTETLLVQNANPDCKTILKALGPAATLEEMMTACQGVGGPGHKARVLAEAMSQVTNSATIMMQRGNFRRQGKTVKCFNCGKEGHIARNCKAPRKKGCWKCGREGHQMKDCTERQANFLREDLAFPQGKAREFSSEQTRANSPTRGELQVWGRDNNSLSEAGAERQGTVSFSFPQITLWQRPIVTIKIGGQLKEALLDTGADDTVLEEINLPGRWKPKMIGGIGGFIKVRQYDEV</sequence>
<evidence type="ECO:0000250" key="1"/>
<evidence type="ECO:0000250" key="2">
    <source>
        <dbReference type="UniProtKB" id="P03347"/>
    </source>
</evidence>
<evidence type="ECO:0000250" key="3">
    <source>
        <dbReference type="UniProtKB" id="P04585"/>
    </source>
</evidence>
<evidence type="ECO:0000250" key="4">
    <source>
        <dbReference type="UniProtKB" id="P12493"/>
    </source>
</evidence>
<evidence type="ECO:0000250" key="5">
    <source>
        <dbReference type="UniProtKB" id="P12497"/>
    </source>
</evidence>
<evidence type="ECO:0000255" key="6"/>
<evidence type="ECO:0000255" key="7">
    <source>
        <dbReference type="PROSITE-ProRule" id="PRU00047"/>
    </source>
</evidence>
<evidence type="ECO:0000255" key="8">
    <source>
        <dbReference type="PROSITE-ProRule" id="PRU00275"/>
    </source>
</evidence>
<evidence type="ECO:0000255" key="9">
    <source>
        <dbReference type="PROSITE-ProRule" id="PRU10094"/>
    </source>
</evidence>
<evidence type="ECO:0000256" key="10">
    <source>
        <dbReference type="SAM" id="MobiDB-lite"/>
    </source>
</evidence>
<evidence type="ECO:0000305" key="11"/>
<accession>P05960</accession>
<keyword id="KW-0014">AIDS</keyword>
<keyword id="KW-0064">Aspartyl protease</keyword>
<keyword id="KW-0167">Capsid protein</keyword>
<keyword id="KW-1262">Eukaryotic host gene expression shutoff by virus</keyword>
<keyword id="KW-1193">Eukaryotic host translation shutoff by virus</keyword>
<keyword id="KW-1032">Host cell membrane</keyword>
<keyword id="KW-1035">Host cytoplasm</keyword>
<keyword id="KW-1039">Host endosome</keyword>
<keyword id="KW-1190">Host gene expression shutoff by virus</keyword>
<keyword id="KW-1043">Host membrane</keyword>
<keyword id="KW-1048">Host nucleus</keyword>
<keyword id="KW-0945">Host-virus interaction</keyword>
<keyword id="KW-0378">Hydrolase</keyword>
<keyword id="KW-0446">Lipid-binding</keyword>
<keyword id="KW-0449">Lipoprotein</keyword>
<keyword id="KW-0472">Membrane</keyword>
<keyword id="KW-0479">Metal-binding</keyword>
<keyword id="KW-0519">Myristate</keyword>
<keyword id="KW-0597">Phosphoprotein</keyword>
<keyword id="KW-0645">Protease</keyword>
<keyword id="KW-0677">Repeat</keyword>
<keyword id="KW-0688">Ribosomal frameshifting</keyword>
<keyword id="KW-0694">RNA-binding</keyword>
<keyword id="KW-0543">Viral nucleoprotein</keyword>
<keyword id="KW-1188">Viral release from host cell</keyword>
<keyword id="KW-0946">Virion</keyword>
<keyword id="KW-0917">Virion maturation</keyword>
<keyword id="KW-0862">Zinc</keyword>
<keyword id="KW-0863">Zinc-finger</keyword>
<organismHost>
    <name type="scientific">Homo sapiens</name>
    <name type="common">Human</name>
    <dbReference type="NCBI Taxonomy" id="9606"/>
</organismHost>
<comment type="function">
    <molecule>Gag-Pol polyprotein</molecule>
    <text evidence="1">Mediates, with Gag polyprotein, the essential events in virion assembly, including binding the plasma membrane, making the protein-protein interactions necessary to create spherical particles, recruiting the viral Env proteins, and packaging the genomic RNA via direct interactions with the RNA packaging sequence (Psi). Gag-Pol polyprotein may regulate its own translation, by the binding genomic RNA in the 5'-UTR. At low concentration, the polyprotein would promote translation, whereas at high concentration, the polyprotein would encapsidate genomic RNA and then shut off translation.</text>
</comment>
<comment type="function">
    <molecule>Matrix protein p17</molecule>
    <text evidence="5">Targets the polyprotein to the plasma membrane via a multipartite membrane-binding signal, that includes its myristoylated N-terminus. Matrix protein is part of the pre-integration complex. Implicated in the release from host cell mediated by Vpu. Binds to RNA.</text>
</comment>
<comment type="function">
    <molecule>Capsid protein p24</molecule>
    <text evidence="3 5">Forms the conical core that encapsulates the genomic RNA-nucleocapsid complex in the virion. Most core are conical, with only 7% tubular. The core is constituted by capsid protein hexamer subunits. The core is disassembled soon after virion entry (By similarity). Host restriction factors such as TRIM5-alpha or TRIMCyp bind retroviral capsids and cause premature capsid disassembly, leading to blocks in reverse transcription. Capsid restriction by TRIM5 is one of the factors which restricts HIV-1 to the human species. Host PIN1 apparently facilitates the virion uncoating. On the other hand, interactions with PDZD8 or CYPA stabilize the capsid.</text>
</comment>
<comment type="function">
    <molecule>Nucleocapsid protein p7</molecule>
    <text evidence="3">Encapsulates and protects viral dimeric unspliced genomic RNA (gRNA). Binds these RNAs through its zinc fingers. Acts as a nucleic acid chaperone which is involved in rearangement of nucleic acid secondary structure during gRNA retrotranscription. Also facilitates template switch leading to recombination. As part of the polyprotein, participates in gRNA dimerization, packaging, tRNA incorporation and virion assembly.</text>
</comment>
<comment type="function">
    <molecule>Protease</molecule>
    <text evidence="3 8">Aspartyl protease that mediates proteolytic cleavages of Gag and Gag-Pol polyproteins during or shortly after the release of the virion from the plasma membrane. Cleavages take place as an ordered, step-wise cascade to yield mature proteins. This process is called maturation. Displays maximal activity during the budding process just prior to particle release from the cell. Also cleaves Nef and Vif, probably concomitantly with viral structural proteins on maturation of virus particles. Hydrolyzes host EIF4GI and PABP1 in order to shut off the capped cellular mRNA translation. The resulting inhibition of cellular protein synthesis serves to ensure maximal viral gene expression and to evade host immune response. Also mediates cleavage of host YTHDF3. Mediates cleavage of host CARD8, thereby activating the CARD8 inflammasome, leading to the clearance of latent HIV-1 in patient CD4(+) T-cells after viral reactivation; in contrast, HIV-1 can evade CARD8-sensing when its protease remains inactive in infected cells prior to viral budding (By similarity).</text>
</comment>
<comment type="catalytic activity">
    <reaction evidence="8">
        <text>Specific for a P1 residue that is hydrophobic, and P1' variable, but often Pro.</text>
        <dbReference type="EC" id="3.4.23.16"/>
    </reaction>
</comment>
<comment type="activity regulation">
    <molecule>Protease</molecule>
    <text evidence="1">The viral protease is inhibited by many synthetic protease inhibitors (PIs), such as amprenavir, atazanavir, indinavir, loprinavir, nelfinavir, ritonavir and saquinavir. Use of protease inhibitors in tritherapy regimens permit more ambitious therapeutic strategies.</text>
</comment>
<comment type="subunit">
    <molecule>Matrix protein p17</molecule>
    <text evidence="3 5">Homotrimer; further assembles as hexamers of trimers (By similarity). Interacts with gp41 (via C-terminus) (By similarity). Interacts with host CALM1; this interaction induces a conformational change in the Matrix protein, triggering exposure of the myristate group (By similarity). Interacts with host AP3D1; this interaction allows the polyprotein trafficking to multivesicular bodies during virus assembly (By similarity). Part of the pre-integration complex (PIC) which is composed of viral genome, matrix protein, Vpr and integrase (By similarity).</text>
</comment>
<comment type="subunit">
    <molecule>Capsid protein p24</molecule>
    <text evidence="3 5">Homodimer; the homodimer further multimerizes as homohexamers or homopentamers. Interacts with human PPIA/CYPA (By similarity); This interaction stabilizes the capsid. Interacts with human NUP153 (By similarity). Interacts with host PDZD8; this interaction stabilizes the capsid (By similarity). Interacts with monkey TRIM5; this interaction destabilizes the capsid (By similarity).</text>
</comment>
<comment type="subunit">
    <molecule>Protease</molecule>
    <text evidence="3 5">Homodimer, whose active site consists of two apposed aspartic acid residues.</text>
</comment>
<comment type="subcellular location">
    <molecule>Gag-Pol polyprotein</molecule>
    <subcellularLocation>
        <location>Host cell membrane</location>
        <topology>Lipid-anchor</topology>
    </subcellularLocation>
    <subcellularLocation>
        <location>Host endosome</location>
        <location>Host multivesicular body</location>
    </subcellularLocation>
    <text evidence="5">These locations are linked to virus assembly sites. The main location is the cell membrane, but under some circumstances, late endosomal compartments can serve as productive sites for virion assembly.</text>
</comment>
<comment type="subcellular location">
    <molecule>Matrix protein p17</molecule>
    <subcellularLocation>
        <location>Virion membrane</location>
        <topology evidence="11">Lipid-anchor</topology>
    </subcellularLocation>
    <subcellularLocation>
        <location evidence="1">Host nucleus</location>
    </subcellularLocation>
    <subcellularLocation>
        <location evidence="1">Host cytoplasm</location>
    </subcellularLocation>
</comment>
<comment type="subcellular location">
    <molecule>Capsid protein p24</molecule>
    <subcellularLocation>
        <location evidence="11">Virion</location>
    </subcellularLocation>
</comment>
<comment type="subcellular location">
    <molecule>Nucleocapsid protein p7</molecule>
    <subcellularLocation>
        <location evidence="11">Virion</location>
    </subcellularLocation>
</comment>
<comment type="alternative products">
    <event type="ribosomal frameshifting"/>
    <isoform>
        <id>P05960-1</id>
        <name>Gag-Pol polyprotein</name>
        <sequence type="displayed"/>
    </isoform>
    <isoform>
        <id>P05887-1</id>
        <name>Gag polyprotein</name>
        <sequence type="external"/>
    </isoform>
    <text>Translation results in the formation of the Gag polyprotein most of the time. Ribosomal frameshifting at the gag-pol genes boundary occurs at low frequency and produces the Gag-Pol polyprotein. This strategy of translation probably allows the virus to modulate the quantity of each viral protein. Maintenance of a correct Gag to Gag-Pol ratio is essential for RNA dimerization and viral infectivity.</text>
</comment>
<comment type="PTM">
    <text evidence="1">Specific enzymatic cleavages by the viral protease yield mature proteins. The protease is released by autocatalytic cleavage. The polyprotein is cleaved during and after budding, this process is termed maturation. Proteolytic cleavage of p66 RT removes the RNase H domain to yield the p51 RT subunit. Nucleocapsid protein p7 might be further cleaved after virus entry (By similarity).</text>
</comment>
<comment type="PTM">
    <molecule>Matrix protein p17</molecule>
    <text evidence="3">Tyrosine phosphorylated presumably in the virion by a host kinase. Phosphorylation is apparently not a major regulator of membrane association.</text>
</comment>
<comment type="PTM">
    <molecule>Capsid protein p24</molecule>
    <text evidence="4">Phosphorylated possibly by host MAPK1; this phosphorylation is necessary for Pin1-mediated virion uncoating.</text>
</comment>
<comment type="PTM">
    <molecule>Nucleocapsid protein p7</molecule>
    <text evidence="2">Methylated by host PRMT6, impairing its function by reducing RNA annealing and the initiation of reverse transcription.</text>
</comment>
<comment type="miscellaneous">
    <text>HIV-1 lineages are divided in three main groups, M (for Major), O (for Outlier), and N (for New, or Non-M, Non-O). The vast majority of strains found worldwide belong to the group M. Group O seems to be endemic to and largely confined to Cameroon and neighboring countries in West Central Africa, where these viruses represent a small minority of HIV-1 strains. The group N is represented by a limited number of isolates from Cameroonian persons. The group M is further subdivided in 9 clades or subtypes (A to D, F to H, J and K).</text>
</comment>
<comment type="miscellaneous">
    <text>Resistance to inhibitors associated with mutations are observed both in viral protease and in reverse transcriptase. Most of the time, single mutations confer only a modest reduction in drug susceptibility. Combination of several mutations is usually required to develop a high-level drug resistance. These mutations are predominantly found in clade B viruses and not in other genotypes. They are listed in the clade B representative isolate HXB2 (AC P04585).</text>
</comment>
<comment type="miscellaneous">
    <molecule>Isoform Gag-Pol polyprotein</molecule>
    <text>Produced by -1 ribosomal frameshifting.</text>
</comment>
<comment type="online information" name="HIV drug resistance mutations">
    <link uri="https://www.iasusa.org/hiv-drug-resistance/hiv-drug-resistance-mutations/"/>
</comment>
<comment type="online information" name="hivdb">
    <link uri="https://hivdb.stanford.edu"/>
    <text>HIV drug resistance database</text>
</comment>
<reference key="1">
    <citation type="journal article" date="1986" name="Proc. Natl. Acad. Sci. U.S.A.">
        <title>Molecular cloning and primary nucleotide sequence analysis of a distinct human immunodeficiency virus isolate reveal significant divergence in its genomic sequences.</title>
        <authorList>
            <person name="Desai S.M."/>
            <person name="Kalyanaraman V.S."/>
            <person name="Casey J.M."/>
            <person name="Srinivasan A."/>
            <person name="Andersen P.R."/>
            <person name="Devare S.G."/>
        </authorList>
    </citation>
    <scope>NUCLEOTIDE SEQUENCE [GENOMIC RNA]</scope>
</reference>
<reference key="2">
    <citation type="journal article" date="1996" name="Curr. Top. Microbiol. Immunol.">
        <title>Proteolytic processing and particle maturation.</title>
        <authorList>
            <person name="Vogt V.M."/>
        </authorList>
    </citation>
    <scope>REVIEW</scope>
</reference>
<reference key="3">
    <citation type="journal article" date="1999" name="J. Mol. Biol.">
        <title>Structural biology of HIV.</title>
        <authorList>
            <person name="Turner B.G."/>
            <person name="Summers M.F."/>
        </authorList>
    </citation>
    <scope>REVIEW</scope>
</reference>
<reference key="4">
    <citation type="journal article" date="2001" name="Annu. Rev. Genet.">
        <title>Mechanisms of retroviral recombination.</title>
        <authorList>
            <person name="Negroni M."/>
            <person name="Buc H."/>
        </authorList>
    </citation>
    <scope>REVIEW</scope>
</reference>
<reference key="5">
    <citation type="journal article" date="2002" name="Genome Biol.">
        <title>Retroviral proteases.</title>
        <authorList>
            <person name="Dunn B.M."/>
            <person name="Goodenow M.M."/>
            <person name="Gustchina A."/>
            <person name="Wlodawer A."/>
        </authorList>
    </citation>
    <scope>REVIEW</scope>
</reference>
<reference key="6">
    <citation type="journal article" date="2003" name="Biochim. Biophys. Acta">
        <title>Role of HIV-1 Gag domains in viral assembly.</title>
        <authorList>
            <person name="Scarlata S."/>
            <person name="Carter C."/>
        </authorList>
    </citation>
    <scope>REVIEW</scope>
</reference>
<protein>
    <recommendedName>
        <fullName>Gag-Pol polyprotein</fullName>
    </recommendedName>
    <alternativeName>
        <fullName>Pr160Gag-Pol</fullName>
    </alternativeName>
    <component>
        <recommendedName>
            <fullName>Matrix protein p17</fullName>
            <shortName>MA</shortName>
        </recommendedName>
    </component>
    <component>
        <recommendedName>
            <fullName>Capsid protein p24</fullName>
            <shortName>CA</shortName>
        </recommendedName>
    </component>
    <component>
        <recommendedName>
            <fullName evidence="5">Spacer peptide 1</fullName>
            <shortName>SP1</shortName>
        </recommendedName>
        <alternativeName>
            <fullName>p2</fullName>
        </alternativeName>
    </component>
    <component>
        <recommendedName>
            <fullName>Nucleocapsid protein p7</fullName>
            <shortName>NC</shortName>
        </recommendedName>
    </component>
    <component>
        <recommendedName>
            <fullName>Transframe peptide</fullName>
            <shortName>TF</shortName>
        </recommendedName>
    </component>
    <component>
        <recommendedName>
            <fullName>p6-pol</fullName>
            <shortName>p6*</shortName>
        </recommendedName>
    </component>
    <component>
        <recommendedName>
            <fullName>Protease</fullName>
            <ecNumber>3.4.23.16</ecNumber>
        </recommendedName>
        <alternativeName>
            <fullName>PR</fullName>
        </alternativeName>
        <alternativeName>
            <fullName>Retropepsin</fullName>
        </alternativeName>
    </component>
</protein>
<dbReference type="EC" id="3.4.23.16"/>
<dbReference type="EMBL" id="M13136">
    <property type="status" value="NOT_ANNOTATED_CDS"/>
    <property type="molecule type" value="Genomic_RNA"/>
</dbReference>
<dbReference type="SMR" id="P05960"/>
<dbReference type="PRO" id="PR:P05960"/>
<dbReference type="GO" id="GO:0042025">
    <property type="term" value="C:host cell nucleus"/>
    <property type="evidence" value="ECO:0007669"/>
    <property type="project" value="UniProtKB-SubCell"/>
</dbReference>
<dbReference type="GO" id="GO:0020002">
    <property type="term" value="C:host cell plasma membrane"/>
    <property type="evidence" value="ECO:0007669"/>
    <property type="project" value="UniProtKB-SubCell"/>
</dbReference>
<dbReference type="GO" id="GO:0072494">
    <property type="term" value="C:host multivesicular body"/>
    <property type="evidence" value="ECO:0007669"/>
    <property type="project" value="UniProtKB-SubCell"/>
</dbReference>
<dbReference type="GO" id="GO:0016020">
    <property type="term" value="C:membrane"/>
    <property type="evidence" value="ECO:0007669"/>
    <property type="project" value="UniProtKB-KW"/>
</dbReference>
<dbReference type="GO" id="GO:0019013">
    <property type="term" value="C:viral nucleocapsid"/>
    <property type="evidence" value="ECO:0007669"/>
    <property type="project" value="UniProtKB-KW"/>
</dbReference>
<dbReference type="GO" id="GO:0055036">
    <property type="term" value="C:virion membrane"/>
    <property type="evidence" value="ECO:0007669"/>
    <property type="project" value="UniProtKB-SubCell"/>
</dbReference>
<dbReference type="GO" id="GO:0004190">
    <property type="term" value="F:aspartic-type endopeptidase activity"/>
    <property type="evidence" value="ECO:0007669"/>
    <property type="project" value="UniProtKB-KW"/>
</dbReference>
<dbReference type="GO" id="GO:0008289">
    <property type="term" value="F:lipid binding"/>
    <property type="evidence" value="ECO:0007669"/>
    <property type="project" value="UniProtKB-KW"/>
</dbReference>
<dbReference type="GO" id="GO:0003723">
    <property type="term" value="F:RNA binding"/>
    <property type="evidence" value="ECO:0007669"/>
    <property type="project" value="UniProtKB-KW"/>
</dbReference>
<dbReference type="GO" id="GO:0005198">
    <property type="term" value="F:structural molecule activity"/>
    <property type="evidence" value="ECO:0007669"/>
    <property type="project" value="InterPro"/>
</dbReference>
<dbReference type="GO" id="GO:0008270">
    <property type="term" value="F:zinc ion binding"/>
    <property type="evidence" value="ECO:0007669"/>
    <property type="project" value="UniProtKB-KW"/>
</dbReference>
<dbReference type="GO" id="GO:0006508">
    <property type="term" value="P:proteolysis"/>
    <property type="evidence" value="ECO:0007669"/>
    <property type="project" value="UniProtKB-KW"/>
</dbReference>
<dbReference type="GO" id="GO:0039657">
    <property type="term" value="P:symbiont-mediated suppression of host gene expression"/>
    <property type="evidence" value="ECO:0007669"/>
    <property type="project" value="UniProtKB-KW"/>
</dbReference>
<dbReference type="GO" id="GO:0075523">
    <property type="term" value="P:viral translational frameshifting"/>
    <property type="evidence" value="ECO:0007669"/>
    <property type="project" value="UniProtKB-KW"/>
</dbReference>
<dbReference type="FunFam" id="1.10.1200.30:FF:000001">
    <property type="entry name" value="Gag polyprotein"/>
    <property type="match status" value="1"/>
</dbReference>
<dbReference type="FunFam" id="1.10.150.90:FF:000001">
    <property type="entry name" value="Gag polyprotein"/>
    <property type="match status" value="1"/>
</dbReference>
<dbReference type="FunFam" id="1.10.375.10:FF:000001">
    <property type="entry name" value="Gag polyprotein"/>
    <property type="match status" value="1"/>
</dbReference>
<dbReference type="FunFam" id="4.10.60.10:FF:000001">
    <property type="entry name" value="Gag polyprotein"/>
    <property type="match status" value="1"/>
</dbReference>
<dbReference type="Gene3D" id="1.10.1200.30">
    <property type="match status" value="1"/>
</dbReference>
<dbReference type="Gene3D" id="2.40.70.10">
    <property type="entry name" value="Acid Proteases"/>
    <property type="match status" value="1"/>
</dbReference>
<dbReference type="Gene3D" id="1.10.375.10">
    <property type="entry name" value="Human Immunodeficiency Virus Type 1 Capsid Protein"/>
    <property type="match status" value="1"/>
</dbReference>
<dbReference type="Gene3D" id="1.10.150.90">
    <property type="entry name" value="Immunodeficiency lentiviruses, gag gene matrix protein p17"/>
    <property type="match status" value="1"/>
</dbReference>
<dbReference type="Gene3D" id="1.20.5.760">
    <property type="entry name" value="Single helix bin"/>
    <property type="match status" value="1"/>
</dbReference>
<dbReference type="Gene3D" id="4.10.60.10">
    <property type="entry name" value="Zinc finger, CCHC-type"/>
    <property type="match status" value="1"/>
</dbReference>
<dbReference type="InterPro" id="IPR001969">
    <property type="entry name" value="Aspartic_peptidase_AS"/>
</dbReference>
<dbReference type="InterPro" id="IPR045345">
    <property type="entry name" value="Gag_p24_C"/>
</dbReference>
<dbReference type="InterPro" id="IPR000071">
    <property type="entry name" value="Lentvrl_matrix_N"/>
</dbReference>
<dbReference type="InterPro" id="IPR012344">
    <property type="entry name" value="Matrix_HIV/RSV_N"/>
</dbReference>
<dbReference type="InterPro" id="IPR001995">
    <property type="entry name" value="Peptidase_A2_cat"/>
</dbReference>
<dbReference type="InterPro" id="IPR021109">
    <property type="entry name" value="Peptidase_aspartic_dom_sf"/>
</dbReference>
<dbReference type="InterPro" id="IPR050195">
    <property type="entry name" value="Primate_lentivir_Gag_pol-like"/>
</dbReference>
<dbReference type="InterPro" id="IPR018061">
    <property type="entry name" value="Retropepsins"/>
</dbReference>
<dbReference type="InterPro" id="IPR008916">
    <property type="entry name" value="Retrov_capsid_C"/>
</dbReference>
<dbReference type="InterPro" id="IPR008919">
    <property type="entry name" value="Retrov_capsid_N"/>
</dbReference>
<dbReference type="InterPro" id="IPR010999">
    <property type="entry name" value="Retrovr_matrix"/>
</dbReference>
<dbReference type="InterPro" id="IPR001878">
    <property type="entry name" value="Znf_CCHC"/>
</dbReference>
<dbReference type="InterPro" id="IPR036875">
    <property type="entry name" value="Znf_CCHC_sf"/>
</dbReference>
<dbReference type="PANTHER" id="PTHR40389">
    <property type="entry name" value="ENDOGENOUS RETROVIRUS GROUP K MEMBER 24 GAG POLYPROTEIN-RELATED"/>
    <property type="match status" value="1"/>
</dbReference>
<dbReference type="PANTHER" id="PTHR40389:SF2">
    <property type="entry name" value="ENDOGENOUS RETROVIRUS GROUP K MEMBER 24 GAG POLYPROTEIN-RELATED"/>
    <property type="match status" value="1"/>
</dbReference>
<dbReference type="Pfam" id="PF00540">
    <property type="entry name" value="Gag_p17"/>
    <property type="match status" value="1"/>
</dbReference>
<dbReference type="Pfam" id="PF19317">
    <property type="entry name" value="Gag_p24_C"/>
    <property type="match status" value="1"/>
</dbReference>
<dbReference type="Pfam" id="PF00077">
    <property type="entry name" value="RVP"/>
    <property type="match status" value="1"/>
</dbReference>
<dbReference type="Pfam" id="PF00098">
    <property type="entry name" value="zf-CCHC"/>
    <property type="match status" value="2"/>
</dbReference>
<dbReference type="PRINTS" id="PR00234">
    <property type="entry name" value="HIV1MATRIX"/>
</dbReference>
<dbReference type="SMART" id="SM00343">
    <property type="entry name" value="ZnF_C2HC"/>
    <property type="match status" value="2"/>
</dbReference>
<dbReference type="SUPFAM" id="SSF50630">
    <property type="entry name" value="Acid proteases"/>
    <property type="match status" value="1"/>
</dbReference>
<dbReference type="SUPFAM" id="SSF47836">
    <property type="entry name" value="Retroviral matrix proteins"/>
    <property type="match status" value="1"/>
</dbReference>
<dbReference type="SUPFAM" id="SSF47353">
    <property type="entry name" value="Retrovirus capsid dimerization domain-like"/>
    <property type="match status" value="1"/>
</dbReference>
<dbReference type="SUPFAM" id="SSF47943">
    <property type="entry name" value="Retrovirus capsid protein, N-terminal core domain"/>
    <property type="match status" value="1"/>
</dbReference>
<dbReference type="SUPFAM" id="SSF57756">
    <property type="entry name" value="Retrovirus zinc finger-like domains"/>
    <property type="match status" value="1"/>
</dbReference>
<dbReference type="PROSITE" id="PS50175">
    <property type="entry name" value="ASP_PROT_RETROV"/>
    <property type="match status" value="1"/>
</dbReference>
<dbReference type="PROSITE" id="PS00141">
    <property type="entry name" value="ASP_PROTEASE"/>
    <property type="match status" value="1"/>
</dbReference>
<dbReference type="PROSITE" id="PS50158">
    <property type="entry name" value="ZF_CCHC"/>
    <property type="match status" value="2"/>
</dbReference>
<gene>
    <name type="primary">gag-pol</name>
</gene>